<feature type="chain" id="PRO_0000163918" description="tRNA dimethylallyltransferase">
    <location>
        <begin position="1"/>
        <end position="308"/>
    </location>
</feature>
<feature type="region of interest" description="Interaction with substrate tRNA" evidence="1">
    <location>
        <begin position="35"/>
        <end position="38"/>
    </location>
</feature>
<feature type="region of interest" description="Interaction with substrate tRNA" evidence="1">
    <location>
        <begin position="159"/>
        <end position="163"/>
    </location>
</feature>
<feature type="binding site" evidence="1">
    <location>
        <begin position="10"/>
        <end position="17"/>
    </location>
    <ligand>
        <name>ATP</name>
        <dbReference type="ChEBI" id="CHEBI:30616"/>
    </ligand>
</feature>
<feature type="binding site" evidence="1">
    <location>
        <begin position="12"/>
        <end position="17"/>
    </location>
    <ligand>
        <name>substrate</name>
    </ligand>
</feature>
<feature type="site" description="Interaction with substrate tRNA" evidence="1">
    <location>
        <position position="101"/>
    </location>
</feature>
<feature type="site" description="Interaction with substrate tRNA" evidence="1">
    <location>
        <position position="123"/>
    </location>
</feature>
<organism>
    <name type="scientific">Francisella tularensis subsp. tularensis (strain SCHU S4 / Schu 4)</name>
    <dbReference type="NCBI Taxonomy" id="177416"/>
    <lineage>
        <taxon>Bacteria</taxon>
        <taxon>Pseudomonadati</taxon>
        <taxon>Pseudomonadota</taxon>
        <taxon>Gammaproteobacteria</taxon>
        <taxon>Thiotrichales</taxon>
        <taxon>Francisellaceae</taxon>
        <taxon>Francisella</taxon>
    </lineage>
</organism>
<sequence>MSKLIYGLAGPTASGKTSLSILLAKKINAEIISVDSSLVYKGMDIGTAKPTLQEQDGIKHHLIDIIEPTGNFSVADFISSVNKLKKEIWARGREVLLVGGTMLYFKGLIEGLSALPESQAEIREALEYQKKAKGLQYLHQQLNEIDPQSAQKINPNDQQRIFRALEVIMISGKKYSELVKTSKVGGLDEDLKLCALVPNDRSILHKNIESRFRQMLDQGFLDEVQNLHKNPMLTKETTAIRSVGYRQAWEYLDGDISYDEFVKKGIVATRQLAKRQLTWIRNWQSSINIVAMENETKELDILKYFGYK</sequence>
<protein>
    <recommendedName>
        <fullName evidence="1">tRNA dimethylallyltransferase</fullName>
        <ecNumber evidence="1">2.5.1.75</ecNumber>
    </recommendedName>
    <alternativeName>
        <fullName evidence="1">Dimethylallyl diphosphate:tRNA dimethylallyltransferase</fullName>
        <shortName evidence="1">DMAPP:tRNA dimethylallyltransferase</shortName>
        <shortName evidence="1">DMATase</shortName>
    </alternativeName>
    <alternativeName>
        <fullName evidence="1">Isopentenyl-diphosphate:tRNA isopentenyltransferase</fullName>
        <shortName evidence="1">IPP transferase</shortName>
        <shortName evidence="1">IPPT</shortName>
        <shortName evidence="1">IPTase</shortName>
    </alternativeName>
</protein>
<gene>
    <name evidence="1" type="primary">miaA</name>
    <name type="ordered locus">FTT_0629</name>
</gene>
<keyword id="KW-0067">ATP-binding</keyword>
<keyword id="KW-0460">Magnesium</keyword>
<keyword id="KW-0547">Nucleotide-binding</keyword>
<keyword id="KW-1185">Reference proteome</keyword>
<keyword id="KW-0808">Transferase</keyword>
<keyword id="KW-0819">tRNA processing</keyword>
<name>MIAA_FRATT</name>
<reference key="1">
    <citation type="journal article" date="2005" name="Nat. Genet.">
        <title>The complete genome sequence of Francisella tularensis, the causative agent of tularemia.</title>
        <authorList>
            <person name="Larsson P."/>
            <person name="Oyston P.C.F."/>
            <person name="Chain P."/>
            <person name="Chu M.C."/>
            <person name="Duffield M."/>
            <person name="Fuxelius H.-H."/>
            <person name="Garcia E."/>
            <person name="Haelltorp G."/>
            <person name="Johansson D."/>
            <person name="Isherwood K.E."/>
            <person name="Karp P.D."/>
            <person name="Larsson E."/>
            <person name="Liu Y."/>
            <person name="Michell S."/>
            <person name="Prior J."/>
            <person name="Prior R."/>
            <person name="Malfatti S."/>
            <person name="Sjoestedt A."/>
            <person name="Svensson K."/>
            <person name="Thompson N."/>
            <person name="Vergez L."/>
            <person name="Wagg J.K."/>
            <person name="Wren B.W."/>
            <person name="Lindler L.E."/>
            <person name="Andersson S.G.E."/>
            <person name="Forsman M."/>
            <person name="Titball R.W."/>
        </authorList>
    </citation>
    <scope>NUCLEOTIDE SEQUENCE [LARGE SCALE GENOMIC DNA]</scope>
    <source>
        <strain>SCHU S4 / Schu 4</strain>
    </source>
</reference>
<dbReference type="EC" id="2.5.1.75" evidence="1"/>
<dbReference type="EMBL" id="AJ749949">
    <property type="protein sequence ID" value="CAG45262.1"/>
    <property type="molecule type" value="Genomic_DNA"/>
</dbReference>
<dbReference type="RefSeq" id="WP_003015652.1">
    <property type="nucleotide sequence ID" value="NZ_CP010290.1"/>
</dbReference>
<dbReference type="RefSeq" id="YP_169650.1">
    <property type="nucleotide sequence ID" value="NC_006570.2"/>
</dbReference>
<dbReference type="SMR" id="Q5NH42"/>
<dbReference type="IntAct" id="Q5NH42">
    <property type="interactions" value="1"/>
</dbReference>
<dbReference type="STRING" id="177416.FTT_0629"/>
<dbReference type="DNASU" id="3190845"/>
<dbReference type="EnsemblBacteria" id="CAG45262">
    <property type="protein sequence ID" value="CAG45262"/>
    <property type="gene ID" value="FTT_0629"/>
</dbReference>
<dbReference type="KEGG" id="ftu:FTT_0629"/>
<dbReference type="eggNOG" id="COG0324">
    <property type="taxonomic scope" value="Bacteria"/>
</dbReference>
<dbReference type="OrthoDB" id="9776390at2"/>
<dbReference type="Proteomes" id="UP000001174">
    <property type="component" value="Chromosome"/>
</dbReference>
<dbReference type="GO" id="GO:0005524">
    <property type="term" value="F:ATP binding"/>
    <property type="evidence" value="ECO:0007669"/>
    <property type="project" value="UniProtKB-UniRule"/>
</dbReference>
<dbReference type="GO" id="GO:0052381">
    <property type="term" value="F:tRNA dimethylallyltransferase activity"/>
    <property type="evidence" value="ECO:0007669"/>
    <property type="project" value="UniProtKB-UniRule"/>
</dbReference>
<dbReference type="GO" id="GO:0006400">
    <property type="term" value="P:tRNA modification"/>
    <property type="evidence" value="ECO:0007669"/>
    <property type="project" value="TreeGrafter"/>
</dbReference>
<dbReference type="FunFam" id="1.10.20.140:FF:000001">
    <property type="entry name" value="tRNA dimethylallyltransferase"/>
    <property type="match status" value="1"/>
</dbReference>
<dbReference type="Gene3D" id="1.10.20.140">
    <property type="match status" value="1"/>
</dbReference>
<dbReference type="Gene3D" id="3.40.50.300">
    <property type="entry name" value="P-loop containing nucleotide triphosphate hydrolases"/>
    <property type="match status" value="1"/>
</dbReference>
<dbReference type="HAMAP" id="MF_00185">
    <property type="entry name" value="IPP_trans"/>
    <property type="match status" value="1"/>
</dbReference>
<dbReference type="InterPro" id="IPR039657">
    <property type="entry name" value="Dimethylallyltransferase"/>
</dbReference>
<dbReference type="InterPro" id="IPR018022">
    <property type="entry name" value="IPT"/>
</dbReference>
<dbReference type="InterPro" id="IPR027417">
    <property type="entry name" value="P-loop_NTPase"/>
</dbReference>
<dbReference type="NCBIfam" id="TIGR00174">
    <property type="entry name" value="miaA"/>
    <property type="match status" value="1"/>
</dbReference>
<dbReference type="PANTHER" id="PTHR11088">
    <property type="entry name" value="TRNA DIMETHYLALLYLTRANSFERASE"/>
    <property type="match status" value="1"/>
</dbReference>
<dbReference type="PANTHER" id="PTHR11088:SF60">
    <property type="entry name" value="TRNA DIMETHYLALLYLTRANSFERASE"/>
    <property type="match status" value="1"/>
</dbReference>
<dbReference type="Pfam" id="PF01715">
    <property type="entry name" value="IPPT"/>
    <property type="match status" value="1"/>
</dbReference>
<dbReference type="SUPFAM" id="SSF52540">
    <property type="entry name" value="P-loop containing nucleoside triphosphate hydrolases"/>
    <property type="match status" value="1"/>
</dbReference>
<proteinExistence type="inferred from homology"/>
<evidence type="ECO:0000255" key="1">
    <source>
        <dbReference type="HAMAP-Rule" id="MF_00185"/>
    </source>
</evidence>
<accession>Q5NH42</accession>
<comment type="function">
    <text evidence="1">Catalyzes the transfer of a dimethylallyl group onto the adenine at position 37 in tRNAs that read codons beginning with uridine, leading to the formation of N6-(dimethylallyl)adenosine (i(6)A).</text>
</comment>
<comment type="catalytic activity">
    <reaction evidence="1">
        <text>adenosine(37) in tRNA + dimethylallyl diphosphate = N(6)-dimethylallyladenosine(37) in tRNA + diphosphate</text>
        <dbReference type="Rhea" id="RHEA:26482"/>
        <dbReference type="Rhea" id="RHEA-COMP:10162"/>
        <dbReference type="Rhea" id="RHEA-COMP:10375"/>
        <dbReference type="ChEBI" id="CHEBI:33019"/>
        <dbReference type="ChEBI" id="CHEBI:57623"/>
        <dbReference type="ChEBI" id="CHEBI:74411"/>
        <dbReference type="ChEBI" id="CHEBI:74415"/>
        <dbReference type="EC" id="2.5.1.75"/>
    </reaction>
</comment>
<comment type="cofactor">
    <cofactor evidence="1">
        <name>Mg(2+)</name>
        <dbReference type="ChEBI" id="CHEBI:18420"/>
    </cofactor>
</comment>
<comment type="subunit">
    <text evidence="1">Monomer.</text>
</comment>
<comment type="similarity">
    <text evidence="1">Belongs to the IPP transferase family.</text>
</comment>